<evidence type="ECO:0000250" key="1">
    <source>
        <dbReference type="UniProtKB" id="Q80XH1"/>
    </source>
</evidence>
<evidence type="ECO:0000250" key="2">
    <source>
        <dbReference type="UniProtKB" id="Q9BQD3"/>
    </source>
</evidence>
<evidence type="ECO:0000256" key="3">
    <source>
        <dbReference type="SAM" id="MobiDB-lite"/>
    </source>
</evidence>
<evidence type="ECO:0000305" key="4"/>
<comment type="function">
    <text evidence="1 2">As part of the BORC complex may play a role in lysosomes movement and localization at the cell periphery. Associated with the cytosolic face of lysosomes, the BORC complex may recruit ARL8B and couple lysosomes to microtubule plus-end-directed kinesin motor. May also be involved in the biogenesis of lysosome-related organelles such as melanosomes.</text>
</comment>
<comment type="subunit">
    <text evidence="1 2">Component of the BLOC-one-related complex (BORC) which is composed of BLOC1S1, BLOC1S2, BORCS5, BORCS6, BORCS7, BORCS8, KXD1 and SNAPIN. Associates with the BLOC-1 complex. Interacts with BLOC1S1. Interacts with DTNBP1/BLOC1S7 (via coiled-coil domain).</text>
</comment>
<comment type="subcellular location">
    <subcellularLocation>
        <location evidence="2">Lysosome membrane</location>
    </subcellularLocation>
</comment>
<comment type="similarity">
    <text evidence="4">Belongs to the KXD1 family.</text>
</comment>
<reference key="1">
    <citation type="submission" date="2005-08" db="EMBL/GenBank/DDBJ databases">
        <authorList>
            <consortium name="NIH - Mammalian Gene Collection (MGC) project"/>
        </authorList>
    </citation>
    <scope>NUCLEOTIDE SEQUENCE [LARGE SCALE MRNA]</scope>
    <source>
        <strain>Hereford</strain>
        <tissue>Testis</tissue>
    </source>
</reference>
<organism>
    <name type="scientific">Bos taurus</name>
    <name type="common">Bovine</name>
    <dbReference type="NCBI Taxonomy" id="9913"/>
    <lineage>
        <taxon>Eukaryota</taxon>
        <taxon>Metazoa</taxon>
        <taxon>Chordata</taxon>
        <taxon>Craniata</taxon>
        <taxon>Vertebrata</taxon>
        <taxon>Euteleostomi</taxon>
        <taxon>Mammalia</taxon>
        <taxon>Eutheria</taxon>
        <taxon>Laurasiatheria</taxon>
        <taxon>Artiodactyla</taxon>
        <taxon>Ruminantia</taxon>
        <taxon>Pecora</taxon>
        <taxon>Bovidae</taxon>
        <taxon>Bovinae</taxon>
        <taxon>Bos</taxon>
    </lineage>
</organism>
<dbReference type="EMBL" id="BC102692">
    <property type="protein sequence ID" value="AAI02693.1"/>
    <property type="molecule type" value="mRNA"/>
</dbReference>
<dbReference type="RefSeq" id="NP_001029777.1">
    <property type="nucleotide sequence ID" value="NM_001034605.2"/>
</dbReference>
<dbReference type="SMR" id="Q3SZV2"/>
<dbReference type="FunCoup" id="Q3SZV2">
    <property type="interactions" value="1170"/>
</dbReference>
<dbReference type="STRING" id="9913.ENSBTAP00000062097"/>
<dbReference type="PaxDb" id="9913-ENSBTAP00000013943"/>
<dbReference type="GeneID" id="534253"/>
<dbReference type="KEGG" id="bta:534253"/>
<dbReference type="CTD" id="79036"/>
<dbReference type="eggNOG" id="KOG3443">
    <property type="taxonomic scope" value="Eukaryota"/>
</dbReference>
<dbReference type="InParanoid" id="Q3SZV2"/>
<dbReference type="OrthoDB" id="10258877at2759"/>
<dbReference type="Proteomes" id="UP000009136">
    <property type="component" value="Unplaced"/>
</dbReference>
<dbReference type="GO" id="GO:0099078">
    <property type="term" value="C:BORC complex"/>
    <property type="evidence" value="ECO:0000250"/>
    <property type="project" value="UniProtKB"/>
</dbReference>
<dbReference type="GO" id="GO:0005765">
    <property type="term" value="C:lysosomal membrane"/>
    <property type="evidence" value="ECO:0007669"/>
    <property type="project" value="UniProtKB-SubCell"/>
</dbReference>
<dbReference type="GO" id="GO:0032418">
    <property type="term" value="P:lysosome localization"/>
    <property type="evidence" value="ECO:0000250"/>
    <property type="project" value="UniProtKB"/>
</dbReference>
<dbReference type="GO" id="GO:0016192">
    <property type="term" value="P:vesicle-mediated transport"/>
    <property type="evidence" value="ECO:0000250"/>
    <property type="project" value="UniProtKB"/>
</dbReference>
<dbReference type="InterPro" id="IPR039843">
    <property type="entry name" value="KXD1-like"/>
</dbReference>
<dbReference type="InterPro" id="IPR019371">
    <property type="entry name" value="KxDL_dom"/>
</dbReference>
<dbReference type="PANTHER" id="PTHR13511">
    <property type="entry name" value="KXDL MOTIF-CONTAINING PROTEIN 1"/>
    <property type="match status" value="1"/>
</dbReference>
<dbReference type="PANTHER" id="PTHR13511:SF0">
    <property type="entry name" value="KXDL MOTIF-CONTAINING PROTEIN 1"/>
    <property type="match status" value="1"/>
</dbReference>
<dbReference type="Pfam" id="PF10241">
    <property type="entry name" value="KxDL"/>
    <property type="match status" value="1"/>
</dbReference>
<proteinExistence type="evidence at transcript level"/>
<sequence>MDPPDSASRVFSSRILSMVNADDVSAIILAQKNMLDRFEKTNEMLLNFNNLSSARLQQMNERFLHHTRTLVEMKRDLDSIFRRIRTLKGKLARQHPEAFSHIPEASLLEDEDEDPIPPSTTTTIATSEQSTGSCDTSPDTVSPSLSPGFEDLSHIRPGSPAINGRSHTDDEEMPGE</sequence>
<feature type="chain" id="PRO_0000295258" description="KxDL motif-containing protein 1">
    <location>
        <begin position="1"/>
        <end position="176"/>
    </location>
</feature>
<feature type="region of interest" description="Disordered" evidence="3">
    <location>
        <begin position="95"/>
        <end position="176"/>
    </location>
</feature>
<feature type="compositionally biased region" description="Low complexity" evidence="3">
    <location>
        <begin position="119"/>
        <end position="131"/>
    </location>
</feature>
<feature type="compositionally biased region" description="Polar residues" evidence="3">
    <location>
        <begin position="132"/>
        <end position="145"/>
    </location>
</feature>
<feature type="modified residue" description="N-acetylmethionine" evidence="2">
    <location>
        <position position="1"/>
    </location>
</feature>
<accession>Q3SZV2</accession>
<keyword id="KW-0007">Acetylation</keyword>
<keyword id="KW-0458">Lysosome</keyword>
<keyword id="KW-0472">Membrane</keyword>
<keyword id="KW-1185">Reference proteome</keyword>
<protein>
    <recommendedName>
        <fullName>KxDL motif-containing protein 1</fullName>
    </recommendedName>
</protein>
<name>KXDL1_BOVIN</name>
<gene>
    <name type="primary">KXD1</name>
</gene>